<sequence>MHVIVPYTDVSPKTRLNSILTASERTAFAQAMLYDVISTLQSNGHTVELLIPTETVMQATDQRDQETIIDSTGVSTEAVSTSTSTHADTTEHNAASDNYVSQSPTHTLSVTPEAIMRILRDDDDPDNEASTQERDGDKEYIDITVDTAQNQIQSNQIVVTADDRALTPAVNSCLNRLSDTETPFSELAVVMADLALITPTAIERLFAREGDIVLAPGRGGGTNAIVVRHPAFRVDYHGTSYRDHYQAATDASLSVGVVDSMRLGTDIDKPTDLPEVLLHNNGMSSVWLQSAGIELNLDDNTGRVGITRKRKNEDVD</sequence>
<feature type="chain" id="PRO_0000398730" description="2-phospho-L-lactate guanylyltransferase">
    <location>
        <begin position="1"/>
        <end position="316"/>
    </location>
</feature>
<feature type="region of interest" description="Disordered" evidence="2">
    <location>
        <begin position="72"/>
        <end position="107"/>
    </location>
</feature>
<feature type="region of interest" description="Disordered" evidence="2">
    <location>
        <begin position="119"/>
        <end position="138"/>
    </location>
</feature>
<feature type="compositionally biased region" description="Low complexity" evidence="2">
    <location>
        <begin position="72"/>
        <end position="85"/>
    </location>
</feature>
<feature type="compositionally biased region" description="Polar residues" evidence="2">
    <location>
        <begin position="92"/>
        <end position="107"/>
    </location>
</feature>
<evidence type="ECO:0000255" key="1">
    <source>
        <dbReference type="HAMAP-Rule" id="MF_02114"/>
    </source>
</evidence>
<evidence type="ECO:0000256" key="2">
    <source>
        <dbReference type="SAM" id="MobiDB-lite"/>
    </source>
</evidence>
<gene>
    <name evidence="1" type="primary">cofC</name>
    <name type="ordered locus">HQ_3149A</name>
</gene>
<dbReference type="EC" id="2.7.7.68" evidence="1"/>
<dbReference type="EMBL" id="AM180088">
    <property type="protein sequence ID" value="CAJ53249.1"/>
    <property type="molecule type" value="Genomic_DNA"/>
</dbReference>
<dbReference type="RefSeq" id="WP_011572355.1">
    <property type="nucleotide sequence ID" value="NC_008212.1"/>
</dbReference>
<dbReference type="SMR" id="Q18FK8"/>
<dbReference type="STRING" id="362976.HQ_3149A"/>
<dbReference type="GeneID" id="4193323"/>
<dbReference type="KEGG" id="hwa:HQ_3149A"/>
<dbReference type="eggNOG" id="arCOG04472">
    <property type="taxonomic scope" value="Archaea"/>
</dbReference>
<dbReference type="HOGENOM" id="CLU_076569_2_0_2"/>
<dbReference type="UniPathway" id="UPA00071"/>
<dbReference type="Proteomes" id="UP000001975">
    <property type="component" value="Chromosome"/>
</dbReference>
<dbReference type="GO" id="GO:0005525">
    <property type="term" value="F:GTP binding"/>
    <property type="evidence" value="ECO:0007669"/>
    <property type="project" value="UniProtKB-KW"/>
</dbReference>
<dbReference type="GO" id="GO:0043814">
    <property type="term" value="F:phospholactate guanylyltransferase activity"/>
    <property type="evidence" value="ECO:0007669"/>
    <property type="project" value="UniProtKB-EC"/>
</dbReference>
<dbReference type="GO" id="GO:0052645">
    <property type="term" value="P:F420-0 metabolic process"/>
    <property type="evidence" value="ECO:0007669"/>
    <property type="project" value="UniProtKB-UniRule"/>
</dbReference>
<dbReference type="Gene3D" id="6.10.140.50">
    <property type="match status" value="1"/>
</dbReference>
<dbReference type="Gene3D" id="3.90.550.10">
    <property type="entry name" value="Spore Coat Polysaccharide Biosynthesis Protein SpsA, Chain A"/>
    <property type="match status" value="2"/>
</dbReference>
<dbReference type="HAMAP" id="MF_02114">
    <property type="entry name" value="CofC"/>
    <property type="match status" value="1"/>
</dbReference>
<dbReference type="InterPro" id="IPR002835">
    <property type="entry name" value="CofC"/>
</dbReference>
<dbReference type="InterPro" id="IPR029044">
    <property type="entry name" value="Nucleotide-diphossugar_trans"/>
</dbReference>
<dbReference type="NCBIfam" id="TIGR03552">
    <property type="entry name" value="F420_cofC"/>
    <property type="match status" value="1"/>
</dbReference>
<dbReference type="PANTHER" id="PTHR40392">
    <property type="entry name" value="2-PHOSPHO-L-LACTATE GUANYLYLTRANSFERASE"/>
    <property type="match status" value="1"/>
</dbReference>
<dbReference type="PANTHER" id="PTHR40392:SF1">
    <property type="entry name" value="2-PHOSPHO-L-LACTATE GUANYLYLTRANSFERASE"/>
    <property type="match status" value="1"/>
</dbReference>
<dbReference type="Pfam" id="PF01983">
    <property type="entry name" value="CofC"/>
    <property type="match status" value="2"/>
</dbReference>
<dbReference type="SUPFAM" id="SSF53448">
    <property type="entry name" value="Nucleotide-diphospho-sugar transferases"/>
    <property type="match status" value="1"/>
</dbReference>
<name>COFC_HALWD</name>
<accession>Q18FK8</accession>
<proteinExistence type="inferred from homology"/>
<organism>
    <name type="scientific">Haloquadratum walsbyi (strain DSM 16790 / HBSQ001)</name>
    <dbReference type="NCBI Taxonomy" id="362976"/>
    <lineage>
        <taxon>Archaea</taxon>
        <taxon>Methanobacteriati</taxon>
        <taxon>Methanobacteriota</taxon>
        <taxon>Stenosarchaea group</taxon>
        <taxon>Halobacteria</taxon>
        <taxon>Halobacteriales</taxon>
        <taxon>Haloferacaceae</taxon>
        <taxon>Haloquadratum</taxon>
    </lineage>
</organism>
<keyword id="KW-0342">GTP-binding</keyword>
<keyword id="KW-0547">Nucleotide-binding</keyword>
<keyword id="KW-0548">Nucleotidyltransferase</keyword>
<keyword id="KW-1185">Reference proteome</keyword>
<keyword id="KW-0808">Transferase</keyword>
<reference key="1">
    <citation type="journal article" date="2006" name="BMC Genomics">
        <title>The genome of the square archaeon Haloquadratum walsbyi: life at the limits of water activity.</title>
        <authorList>
            <person name="Bolhuis H."/>
            <person name="Palm P."/>
            <person name="Wende A."/>
            <person name="Falb M."/>
            <person name="Rampp M."/>
            <person name="Rodriguez-Valera F."/>
            <person name="Pfeiffer F."/>
            <person name="Oesterhelt D."/>
        </authorList>
    </citation>
    <scope>NUCLEOTIDE SEQUENCE [LARGE SCALE GENOMIC DNA]</scope>
    <source>
        <strain>DSM 16790 / HBSQ001</strain>
    </source>
</reference>
<protein>
    <recommendedName>
        <fullName evidence="1">2-phospho-L-lactate guanylyltransferase</fullName>
        <shortName evidence="1">LP guanylyltransferase</shortName>
        <ecNumber evidence="1">2.7.7.68</ecNumber>
    </recommendedName>
</protein>
<comment type="function">
    <text evidence="1">Guanylyltransferase that catalyzes the activation of (2S)-2-phospholactate (2-PL) as (2S)-lactyl-2-diphospho-5'-guanosine, via the condensation of 2-PL with GTP. It is involved in the biosynthesis of coenzyme F420, a hydride carrier cofactor.</text>
</comment>
<comment type="catalytic activity">
    <reaction evidence="1">
        <text>(2S)-2-phospholactate + GTP + H(+) = (2S)-lactyl-2-diphospho-5'-guanosine + diphosphate</text>
        <dbReference type="Rhea" id="RHEA:63424"/>
        <dbReference type="ChEBI" id="CHEBI:15378"/>
        <dbReference type="ChEBI" id="CHEBI:33019"/>
        <dbReference type="ChEBI" id="CHEBI:37565"/>
        <dbReference type="ChEBI" id="CHEBI:59435"/>
        <dbReference type="ChEBI" id="CHEBI:59906"/>
        <dbReference type="EC" id="2.7.7.68"/>
    </reaction>
</comment>
<comment type="pathway">
    <text evidence="1">Cofactor biosynthesis; coenzyme F420 biosynthesis.</text>
</comment>
<comment type="subunit">
    <text evidence="1">Homodimer.</text>
</comment>
<comment type="similarity">
    <text evidence="1">Belongs to the CofC family.</text>
</comment>